<comment type="function">
    <text>PsaA and PsaB bind P700, the primary electron donor of photosystem I (PSI), as well as the electron acceptors A0, A1 and FX. PSI is a plastocyanin-ferredoxin oxidoreductase, converting photonic excitation into a charge separation, which transfers an electron from the donor P700 chlorophyll pair to the spectroscopically characterized acceptors A0, A1, FX, FA and FB in turn. Oxidized P700 is reduced on the lumenal side of the thylakoid membrane by plastocyanin.</text>
</comment>
<comment type="catalytic activity">
    <reaction evidence="1">
        <text>reduced [plastocyanin] + hnu + oxidized [2Fe-2S]-[ferredoxin] = oxidized [plastocyanin] + reduced [2Fe-2S]-[ferredoxin]</text>
        <dbReference type="Rhea" id="RHEA:30407"/>
        <dbReference type="Rhea" id="RHEA-COMP:10000"/>
        <dbReference type="Rhea" id="RHEA-COMP:10001"/>
        <dbReference type="Rhea" id="RHEA-COMP:10039"/>
        <dbReference type="Rhea" id="RHEA-COMP:10040"/>
        <dbReference type="ChEBI" id="CHEBI:29036"/>
        <dbReference type="ChEBI" id="CHEBI:30212"/>
        <dbReference type="ChEBI" id="CHEBI:33737"/>
        <dbReference type="ChEBI" id="CHEBI:33738"/>
        <dbReference type="ChEBI" id="CHEBI:49552"/>
        <dbReference type="EC" id="1.97.1.12"/>
    </reaction>
</comment>
<comment type="cofactor">
    <text evidence="1">P700 is a chlorophyll a/chlorophyll a' dimer, A0 is one or more chlorophyll a, A1 is one or both phylloquinones and FX is a shared 4Fe-4S iron-sulfur center.</text>
</comment>
<comment type="subunit">
    <text evidence="1">The PsaA/B heterodimer binds the P700 chlorophyll special pair and subsequent electron acceptors. PSI consists of a core antenna complex that captures photons, and an electron transfer chain that converts photonic excitation into a charge separation. The eukaryotic PSI reaction center is composed of at least 11 subunits.</text>
</comment>
<comment type="subcellular location">
    <subcellularLocation>
        <location evidence="1">Plastid</location>
        <location evidence="1">Chloroplast thylakoid membrane</location>
        <topology evidence="1">Multi-pass membrane protein</topology>
    </subcellularLocation>
</comment>
<comment type="similarity">
    <text evidence="1">Belongs to the PsaA/PsaB family.</text>
</comment>
<reference key="1">
    <citation type="journal article" date="2006" name="BMC Evol. Biol.">
        <title>Phylogenetic analyses of Vitis (Vitaceae) based on complete chloroplast genome sequences: effects of taxon sampling and phylogenetic methods on resolving relationships among rosids.</title>
        <authorList>
            <person name="Jansen R.K."/>
            <person name="Kaittanis C."/>
            <person name="Lee S.-B."/>
            <person name="Saski C."/>
            <person name="Tomkins J."/>
            <person name="Alverson A.J."/>
            <person name="Daniell H."/>
        </authorList>
    </citation>
    <scope>NUCLEOTIDE SEQUENCE [LARGE SCALE GENOMIC DNA]</scope>
    <source>
        <strain>cv. Maxxa</strain>
    </source>
</reference>
<accession>Q0ZJ20</accession>
<dbReference type="EC" id="1.97.1.12" evidence="1"/>
<dbReference type="EMBL" id="DQ424856">
    <property type="protein sequence ID" value="ABE47534.1"/>
    <property type="molecule type" value="Genomic_DNA"/>
</dbReference>
<dbReference type="RefSeq" id="YP_567076.1">
    <property type="nucleotide sequence ID" value="NC_007957.1"/>
</dbReference>
<dbReference type="SMR" id="Q0ZJ20"/>
<dbReference type="FunCoup" id="Q0ZJ20">
    <property type="interactions" value="264"/>
</dbReference>
<dbReference type="STRING" id="29760.Q0ZJ20"/>
<dbReference type="PaxDb" id="29760-VIT_19s0015g02800.t01"/>
<dbReference type="GeneID" id="4025091"/>
<dbReference type="KEGG" id="vvi:4025091"/>
<dbReference type="InParanoid" id="Q0ZJ20"/>
<dbReference type="OrthoDB" id="927100at71240"/>
<dbReference type="Proteomes" id="UP000009183">
    <property type="component" value="Chloroplast"/>
</dbReference>
<dbReference type="ExpressionAtlas" id="Q0ZJ20">
    <property type="expression patterns" value="baseline and differential"/>
</dbReference>
<dbReference type="GO" id="GO:0009535">
    <property type="term" value="C:chloroplast thylakoid membrane"/>
    <property type="evidence" value="ECO:0007669"/>
    <property type="project" value="UniProtKB-SubCell"/>
</dbReference>
<dbReference type="GO" id="GO:0009522">
    <property type="term" value="C:photosystem I"/>
    <property type="evidence" value="ECO:0007669"/>
    <property type="project" value="UniProtKB-KW"/>
</dbReference>
<dbReference type="GO" id="GO:0051539">
    <property type="term" value="F:4 iron, 4 sulfur cluster binding"/>
    <property type="evidence" value="ECO:0007669"/>
    <property type="project" value="UniProtKB-KW"/>
</dbReference>
<dbReference type="GO" id="GO:0016168">
    <property type="term" value="F:chlorophyll binding"/>
    <property type="evidence" value="ECO:0007669"/>
    <property type="project" value="UniProtKB-KW"/>
</dbReference>
<dbReference type="GO" id="GO:0009055">
    <property type="term" value="F:electron transfer activity"/>
    <property type="evidence" value="ECO:0007669"/>
    <property type="project" value="UniProtKB-UniRule"/>
</dbReference>
<dbReference type="GO" id="GO:0000287">
    <property type="term" value="F:magnesium ion binding"/>
    <property type="evidence" value="ECO:0007669"/>
    <property type="project" value="UniProtKB-UniRule"/>
</dbReference>
<dbReference type="GO" id="GO:0016491">
    <property type="term" value="F:oxidoreductase activity"/>
    <property type="evidence" value="ECO:0007669"/>
    <property type="project" value="UniProtKB-KW"/>
</dbReference>
<dbReference type="GO" id="GO:0015979">
    <property type="term" value="P:photosynthesis"/>
    <property type="evidence" value="ECO:0007669"/>
    <property type="project" value="UniProtKB-UniRule"/>
</dbReference>
<dbReference type="FunFam" id="1.20.1130.10:FF:000001">
    <property type="entry name" value="Photosystem I P700 chlorophyll a apoprotein A2"/>
    <property type="match status" value="1"/>
</dbReference>
<dbReference type="Gene3D" id="1.20.1130.10">
    <property type="entry name" value="Photosystem I PsaA/PsaB"/>
    <property type="match status" value="1"/>
</dbReference>
<dbReference type="HAMAP" id="MF_00458">
    <property type="entry name" value="PSI_PsaA"/>
    <property type="match status" value="1"/>
</dbReference>
<dbReference type="InterPro" id="IPR006243">
    <property type="entry name" value="PSI_PsaA"/>
</dbReference>
<dbReference type="InterPro" id="IPR001280">
    <property type="entry name" value="PSI_PsaA/B"/>
</dbReference>
<dbReference type="InterPro" id="IPR020586">
    <property type="entry name" value="PSI_PsaA/B_CS"/>
</dbReference>
<dbReference type="InterPro" id="IPR036408">
    <property type="entry name" value="PSI_PsaA/B_sf"/>
</dbReference>
<dbReference type="NCBIfam" id="TIGR01335">
    <property type="entry name" value="psaA"/>
    <property type="match status" value="1"/>
</dbReference>
<dbReference type="PANTHER" id="PTHR30128">
    <property type="entry name" value="OUTER MEMBRANE PROTEIN, OMPA-RELATED"/>
    <property type="match status" value="1"/>
</dbReference>
<dbReference type="PANTHER" id="PTHR30128:SF19">
    <property type="entry name" value="PHOTOSYSTEM I P700 CHLOROPHYLL A APOPROTEIN A1-RELATED"/>
    <property type="match status" value="1"/>
</dbReference>
<dbReference type="Pfam" id="PF00223">
    <property type="entry name" value="PsaA_PsaB"/>
    <property type="match status" value="1"/>
</dbReference>
<dbReference type="PIRSF" id="PIRSF002905">
    <property type="entry name" value="PSI_A"/>
    <property type="match status" value="1"/>
</dbReference>
<dbReference type="PRINTS" id="PR00257">
    <property type="entry name" value="PHOTSYSPSAAB"/>
</dbReference>
<dbReference type="SUPFAM" id="SSF81558">
    <property type="entry name" value="Photosystem I subunits PsaA/PsaB"/>
    <property type="match status" value="1"/>
</dbReference>
<dbReference type="PROSITE" id="PS00419">
    <property type="entry name" value="PHOTOSYSTEM_I_PSAAB"/>
    <property type="match status" value="1"/>
</dbReference>
<gene>
    <name evidence="1" type="primary">psaA</name>
</gene>
<name>PSAA_VITVI</name>
<sequence>MIIRSPEPEVKILVDRDPIKTSFEEWARPGHFSRTIAKGPDTTTWIWNLHADAHDFDSHTSDLEEISRKVFSAHFGQLSIIFLWLSGMYFHGARFSNYEAWLSDPTHIGPSAQVVWPIVGQEILNGDVGGGFRGIQITSGFFQMWRASGITNELQLYCTAIGALVFAALMLFAGWFHYHKAAPKLAWFQDVESMLNHHLAGLLGLGSLSWAGHQVHVSLPINQFLNAGVDPKEIPLPHEFILNRDLLAQLYPSFAEGATPFFTLNWSKYAEFLTFRGGLDPVTGGLWLTDIAHHHLAIAILFLIAGHMYRTNWGIGHGLKDILEAHKGPFTGQGHKGLYEILTTSWHAQLSLNLAMLGSLTIVVAHHMYSMPPYPYLATDYGTQLSLFTHHMWIGGFLIVGAAAHAAIFMVRDYDPTTRYNDLLDRVLRHRDAIISHLNWACIFLGFHSFGLYIHNDTMSALGRPQDMFSDTAIQLQPVFAQWIQNTHALAPSATAPGATTSTSLTWGGGDLVAVGGKVALLPIPLGTADFLVHHIHAFTIHVTVLILLKGVLFARSSRLIPDKANLGFRFPCDGPGRGGTCQVSAWDHVFLGLFWMYNSISVVIFHFSWKMQSDVWGSISDQGVLTHITGGNFAQSSITINGWLRDFLWAQASQVIQSYGSSLSAYGLFFLGAHFVWAFSLMFLFSGRGYWQELIESIVWAHNKLKVAPATQPRALSIVQGRAVGVTHYLLGGIATTWAFFLARIIAVG</sequence>
<protein>
    <recommendedName>
        <fullName evidence="1">Photosystem I P700 chlorophyll a apoprotein A1</fullName>
        <ecNumber evidence="1">1.97.1.12</ecNumber>
    </recommendedName>
    <alternativeName>
        <fullName evidence="1">PSI-A</fullName>
    </alternativeName>
    <alternativeName>
        <fullName evidence="1">PsaA</fullName>
    </alternativeName>
</protein>
<evidence type="ECO:0000255" key="1">
    <source>
        <dbReference type="HAMAP-Rule" id="MF_00458"/>
    </source>
</evidence>
<organism>
    <name type="scientific">Vitis vinifera</name>
    <name type="common">Grape</name>
    <dbReference type="NCBI Taxonomy" id="29760"/>
    <lineage>
        <taxon>Eukaryota</taxon>
        <taxon>Viridiplantae</taxon>
        <taxon>Streptophyta</taxon>
        <taxon>Embryophyta</taxon>
        <taxon>Tracheophyta</taxon>
        <taxon>Spermatophyta</taxon>
        <taxon>Magnoliopsida</taxon>
        <taxon>eudicotyledons</taxon>
        <taxon>Gunneridae</taxon>
        <taxon>Pentapetalae</taxon>
        <taxon>rosids</taxon>
        <taxon>Vitales</taxon>
        <taxon>Vitaceae</taxon>
        <taxon>Viteae</taxon>
        <taxon>Vitis</taxon>
    </lineage>
</organism>
<proteinExistence type="inferred from homology"/>
<geneLocation type="chloroplast"/>
<keyword id="KW-0004">4Fe-4S</keyword>
<keyword id="KW-0148">Chlorophyll</keyword>
<keyword id="KW-0150">Chloroplast</keyword>
<keyword id="KW-0157">Chromophore</keyword>
<keyword id="KW-0249">Electron transport</keyword>
<keyword id="KW-0408">Iron</keyword>
<keyword id="KW-0411">Iron-sulfur</keyword>
<keyword id="KW-0460">Magnesium</keyword>
<keyword id="KW-0472">Membrane</keyword>
<keyword id="KW-0479">Metal-binding</keyword>
<keyword id="KW-0560">Oxidoreductase</keyword>
<keyword id="KW-0602">Photosynthesis</keyword>
<keyword id="KW-0603">Photosystem I</keyword>
<keyword id="KW-0934">Plastid</keyword>
<keyword id="KW-1185">Reference proteome</keyword>
<keyword id="KW-0793">Thylakoid</keyword>
<keyword id="KW-0812">Transmembrane</keyword>
<keyword id="KW-1133">Transmembrane helix</keyword>
<keyword id="KW-0813">Transport</keyword>
<feature type="chain" id="PRO_0000275967" description="Photosystem I P700 chlorophyll a apoprotein A1">
    <location>
        <begin position="1"/>
        <end position="750"/>
    </location>
</feature>
<feature type="transmembrane region" description="Helical; Name=I" evidence="1">
    <location>
        <begin position="70"/>
        <end position="93"/>
    </location>
</feature>
<feature type="transmembrane region" description="Helical; Name=II" evidence="1">
    <location>
        <begin position="156"/>
        <end position="179"/>
    </location>
</feature>
<feature type="transmembrane region" description="Helical; Name=III" evidence="1">
    <location>
        <begin position="195"/>
        <end position="219"/>
    </location>
</feature>
<feature type="transmembrane region" description="Helical; Name=IV" evidence="1">
    <location>
        <begin position="291"/>
        <end position="309"/>
    </location>
</feature>
<feature type="transmembrane region" description="Helical; Name=V" evidence="1">
    <location>
        <begin position="346"/>
        <end position="369"/>
    </location>
</feature>
<feature type="transmembrane region" description="Helical; Name=VI" evidence="1">
    <location>
        <begin position="385"/>
        <end position="411"/>
    </location>
</feature>
<feature type="transmembrane region" description="Helical; Name=VII" evidence="1">
    <location>
        <begin position="433"/>
        <end position="455"/>
    </location>
</feature>
<feature type="transmembrane region" description="Helical; Name=VIII" evidence="1">
    <location>
        <begin position="531"/>
        <end position="549"/>
    </location>
</feature>
<feature type="transmembrane region" description="Helical; Name=IX" evidence="1">
    <location>
        <begin position="589"/>
        <end position="610"/>
    </location>
</feature>
<feature type="transmembrane region" description="Helical; Name=X" evidence="1">
    <location>
        <begin position="664"/>
        <end position="686"/>
    </location>
</feature>
<feature type="transmembrane region" description="Helical; Name=XI" evidence="1">
    <location>
        <begin position="724"/>
        <end position="744"/>
    </location>
</feature>
<feature type="binding site" evidence="1">
    <location>
        <position position="573"/>
    </location>
    <ligand>
        <name>[4Fe-4S] cluster</name>
        <dbReference type="ChEBI" id="CHEBI:49883"/>
        <note>ligand shared between dimeric partners</note>
    </ligand>
</feature>
<feature type="binding site" evidence="1">
    <location>
        <position position="582"/>
    </location>
    <ligand>
        <name>[4Fe-4S] cluster</name>
        <dbReference type="ChEBI" id="CHEBI:49883"/>
        <note>ligand shared between dimeric partners</note>
    </ligand>
</feature>
<feature type="binding site" description="axial binding residue" evidence="1">
    <location>
        <position position="675"/>
    </location>
    <ligand>
        <name>chlorophyll a'</name>
        <dbReference type="ChEBI" id="CHEBI:189419"/>
        <label>A1</label>
    </ligand>
    <ligandPart>
        <name>Mg</name>
        <dbReference type="ChEBI" id="CHEBI:25107"/>
    </ligandPart>
</feature>
<feature type="binding site" description="axial binding residue" evidence="1">
    <location>
        <position position="683"/>
    </location>
    <ligand>
        <name>chlorophyll a</name>
        <dbReference type="ChEBI" id="CHEBI:58416"/>
        <label>A3</label>
    </ligand>
    <ligandPart>
        <name>Mg</name>
        <dbReference type="ChEBI" id="CHEBI:25107"/>
    </ligandPart>
</feature>
<feature type="binding site" evidence="1">
    <location>
        <position position="691"/>
    </location>
    <ligand>
        <name>chlorophyll a</name>
        <dbReference type="ChEBI" id="CHEBI:58416"/>
        <label>A3</label>
    </ligand>
</feature>
<feature type="binding site" evidence="1">
    <location>
        <position position="692"/>
    </location>
    <ligand>
        <name>phylloquinone</name>
        <dbReference type="ChEBI" id="CHEBI:18067"/>
        <label>A</label>
    </ligand>
</feature>